<protein>
    <recommendedName>
        <fullName>L-threonine dehydratase biosynthetic IlvA</fullName>
        <ecNumber>4.3.1.19</ecNumber>
    </recommendedName>
    <alternativeName>
        <fullName>Threonine deaminase</fullName>
    </alternativeName>
</protein>
<dbReference type="EC" id="4.3.1.19"/>
<dbReference type="EMBL" id="AE004439">
    <property type="protein sequence ID" value="AAK03708.1"/>
    <property type="molecule type" value="Genomic_DNA"/>
</dbReference>
<dbReference type="RefSeq" id="WP_005718461.1">
    <property type="nucleotide sequence ID" value="NC_002663.1"/>
</dbReference>
<dbReference type="SMR" id="Q9CKJ2"/>
<dbReference type="STRING" id="272843.PM1624"/>
<dbReference type="EnsemblBacteria" id="AAK03708">
    <property type="protein sequence ID" value="AAK03708"/>
    <property type="gene ID" value="PM1624"/>
</dbReference>
<dbReference type="KEGG" id="pmu:PM1624"/>
<dbReference type="HOGENOM" id="CLU_021152_6_2_6"/>
<dbReference type="OrthoDB" id="9811476at2"/>
<dbReference type="UniPathway" id="UPA00047">
    <property type="reaction ID" value="UER00054"/>
</dbReference>
<dbReference type="Proteomes" id="UP000000809">
    <property type="component" value="Chromosome"/>
</dbReference>
<dbReference type="GO" id="GO:0003941">
    <property type="term" value="F:L-serine ammonia-lyase activity"/>
    <property type="evidence" value="ECO:0007669"/>
    <property type="project" value="TreeGrafter"/>
</dbReference>
<dbReference type="GO" id="GO:0030170">
    <property type="term" value="F:pyridoxal phosphate binding"/>
    <property type="evidence" value="ECO:0007669"/>
    <property type="project" value="InterPro"/>
</dbReference>
<dbReference type="GO" id="GO:0004794">
    <property type="term" value="F:threonine deaminase activity"/>
    <property type="evidence" value="ECO:0007669"/>
    <property type="project" value="UniProtKB-EC"/>
</dbReference>
<dbReference type="GO" id="GO:0009097">
    <property type="term" value="P:isoleucine biosynthetic process"/>
    <property type="evidence" value="ECO:0007669"/>
    <property type="project" value="UniProtKB-UniPathway"/>
</dbReference>
<dbReference type="GO" id="GO:0006565">
    <property type="term" value="P:L-serine catabolic process"/>
    <property type="evidence" value="ECO:0007669"/>
    <property type="project" value="TreeGrafter"/>
</dbReference>
<dbReference type="GO" id="GO:0006567">
    <property type="term" value="P:threonine catabolic process"/>
    <property type="evidence" value="ECO:0007669"/>
    <property type="project" value="TreeGrafter"/>
</dbReference>
<dbReference type="GO" id="GO:0006566">
    <property type="term" value="P:threonine metabolic process"/>
    <property type="evidence" value="ECO:0000250"/>
    <property type="project" value="UniProtKB"/>
</dbReference>
<dbReference type="CDD" id="cd04906">
    <property type="entry name" value="ACT_ThrD-I_1"/>
    <property type="match status" value="1"/>
</dbReference>
<dbReference type="CDD" id="cd04907">
    <property type="entry name" value="ACT_ThrD-I_2"/>
    <property type="match status" value="1"/>
</dbReference>
<dbReference type="CDD" id="cd01562">
    <property type="entry name" value="Thr-dehyd"/>
    <property type="match status" value="1"/>
</dbReference>
<dbReference type="FunFam" id="3.40.1020.10:FF:000001">
    <property type="entry name" value="L-threonine dehydratase"/>
    <property type="match status" value="1"/>
</dbReference>
<dbReference type="FunFam" id="3.40.50.1100:FF:000007">
    <property type="entry name" value="L-threonine dehydratase catabolic TdcB"/>
    <property type="match status" value="1"/>
</dbReference>
<dbReference type="FunFam" id="3.40.50.1100:FF:000005">
    <property type="entry name" value="Threonine dehydratase catabolic"/>
    <property type="match status" value="1"/>
</dbReference>
<dbReference type="Gene3D" id="3.40.50.1100">
    <property type="match status" value="2"/>
</dbReference>
<dbReference type="Gene3D" id="3.40.1020.10">
    <property type="entry name" value="Biosynthetic Threonine Deaminase, Domain 3"/>
    <property type="match status" value="1"/>
</dbReference>
<dbReference type="InterPro" id="IPR045865">
    <property type="entry name" value="ACT-like_dom_sf"/>
</dbReference>
<dbReference type="InterPro" id="IPR050147">
    <property type="entry name" value="Ser/Thr_Dehydratase"/>
</dbReference>
<dbReference type="InterPro" id="IPR000634">
    <property type="entry name" value="Ser/Thr_deHydtase_PyrdxlP-BS"/>
</dbReference>
<dbReference type="InterPro" id="IPR001721">
    <property type="entry name" value="TD_ACT-like"/>
</dbReference>
<dbReference type="InterPro" id="IPR038110">
    <property type="entry name" value="TD_ACT-like_sf"/>
</dbReference>
<dbReference type="InterPro" id="IPR005787">
    <property type="entry name" value="Thr_deHydtase_biosynth"/>
</dbReference>
<dbReference type="InterPro" id="IPR001926">
    <property type="entry name" value="TrpB-like_PALP"/>
</dbReference>
<dbReference type="InterPro" id="IPR036052">
    <property type="entry name" value="TrpB-like_PALP_sf"/>
</dbReference>
<dbReference type="NCBIfam" id="TIGR01124">
    <property type="entry name" value="ilvA_2Cterm"/>
    <property type="match status" value="1"/>
</dbReference>
<dbReference type="NCBIfam" id="NF006674">
    <property type="entry name" value="PRK09224.1"/>
    <property type="match status" value="1"/>
</dbReference>
<dbReference type="PANTHER" id="PTHR48078:SF11">
    <property type="entry name" value="THREONINE DEHYDRATASE, MITOCHONDRIAL"/>
    <property type="match status" value="1"/>
</dbReference>
<dbReference type="PANTHER" id="PTHR48078">
    <property type="entry name" value="THREONINE DEHYDRATASE, MITOCHONDRIAL-RELATED"/>
    <property type="match status" value="1"/>
</dbReference>
<dbReference type="Pfam" id="PF00291">
    <property type="entry name" value="PALP"/>
    <property type="match status" value="1"/>
</dbReference>
<dbReference type="Pfam" id="PF00585">
    <property type="entry name" value="Thr_dehydrat_C"/>
    <property type="match status" value="2"/>
</dbReference>
<dbReference type="SUPFAM" id="SSF55021">
    <property type="entry name" value="ACT-like"/>
    <property type="match status" value="2"/>
</dbReference>
<dbReference type="SUPFAM" id="SSF53686">
    <property type="entry name" value="Tryptophan synthase beta subunit-like PLP-dependent enzymes"/>
    <property type="match status" value="1"/>
</dbReference>
<dbReference type="PROSITE" id="PS51672">
    <property type="entry name" value="ACT_LIKE"/>
    <property type="match status" value="2"/>
</dbReference>
<dbReference type="PROSITE" id="PS00165">
    <property type="entry name" value="DEHYDRATASE_SER_THR"/>
    <property type="match status" value="1"/>
</dbReference>
<gene>
    <name type="primary">ilvA</name>
    <name type="ordered locus">PM1624</name>
</gene>
<organism>
    <name type="scientific">Pasteurella multocida (strain Pm70)</name>
    <dbReference type="NCBI Taxonomy" id="272843"/>
    <lineage>
        <taxon>Bacteria</taxon>
        <taxon>Pseudomonadati</taxon>
        <taxon>Pseudomonadota</taxon>
        <taxon>Gammaproteobacteria</taxon>
        <taxon>Pasteurellales</taxon>
        <taxon>Pasteurellaceae</taxon>
        <taxon>Pasteurella</taxon>
    </lineage>
</organism>
<keyword id="KW-0028">Amino-acid biosynthesis</keyword>
<keyword id="KW-0100">Branched-chain amino acid biosynthesis</keyword>
<keyword id="KW-0412">Isoleucine biosynthesis</keyword>
<keyword id="KW-0456">Lyase</keyword>
<keyword id="KW-0663">Pyridoxal phosphate</keyword>
<keyword id="KW-1185">Reference proteome</keyword>
<keyword id="KW-0677">Repeat</keyword>
<feature type="chain" id="PRO_0000185579" description="L-threonine dehydratase biosynthetic IlvA">
    <location>
        <begin position="1"/>
        <end position="513"/>
    </location>
</feature>
<feature type="domain" description="ACT-like 1" evidence="2">
    <location>
        <begin position="338"/>
        <end position="409"/>
    </location>
</feature>
<feature type="domain" description="ACT-like 2" evidence="2">
    <location>
        <begin position="432"/>
        <end position="504"/>
    </location>
</feature>
<feature type="binding site" evidence="1">
    <location>
        <position position="88"/>
    </location>
    <ligand>
        <name>pyridoxal 5'-phosphate</name>
        <dbReference type="ChEBI" id="CHEBI:597326"/>
    </ligand>
</feature>
<feature type="binding site" evidence="1">
    <location>
        <begin position="187"/>
        <end position="191"/>
    </location>
    <ligand>
        <name>pyridoxal 5'-phosphate</name>
        <dbReference type="ChEBI" id="CHEBI:597326"/>
    </ligand>
</feature>
<feature type="binding site" evidence="1">
    <location>
        <position position="314"/>
    </location>
    <ligand>
        <name>pyridoxal 5'-phosphate</name>
        <dbReference type="ChEBI" id="CHEBI:597326"/>
    </ligand>
</feature>
<feature type="modified residue" description="N6-(pyridoxal phosphate)lysine" evidence="1">
    <location>
        <position position="61"/>
    </location>
</feature>
<evidence type="ECO:0000250" key="1"/>
<evidence type="ECO:0000255" key="2">
    <source>
        <dbReference type="PROSITE-ProRule" id="PRU01008"/>
    </source>
</evidence>
<evidence type="ECO:0000305" key="3"/>
<reference key="1">
    <citation type="journal article" date="2001" name="Proc. Natl. Acad. Sci. U.S.A.">
        <title>Complete genomic sequence of Pasteurella multocida Pm70.</title>
        <authorList>
            <person name="May B.J."/>
            <person name="Zhang Q."/>
            <person name="Li L.L."/>
            <person name="Paustian M.L."/>
            <person name="Whittam T.S."/>
            <person name="Kapur V."/>
        </authorList>
    </citation>
    <scope>NUCLEOTIDE SEQUENCE [LARGE SCALE GENOMIC DNA]</scope>
    <source>
        <strain>Pm70</strain>
    </source>
</reference>
<sequence>MVNNLHSAHPTGAEYLKAVLSSKVYDVAQVTPLQDMAKLSERLGNKVFIKREDRQPVHSFKLRGAYAMIAGLSAEQKASGVIAASAGNHAQGVALSAKHLGLRALIVMPQNTPSIKVDAVRGFGGEVLLHGANFDEAKAKAIELAESKNMTFIPPFDHPAVIAGQGSIAMELLQQNSQIDRIFVPVGGGGLAAGIAVLIKQLMPEIKVIGVESKDSACLYRALKAGKPIDLDRVGLFADGVAVKRIGDETFRVCQQYIDDVVLVDGDEICAAVKDIFENVRAIAEPSGALSLAGLKKYVKEHNIQGETLVNVLSGANLNFHTLRYVSERCEIGEQHEALLAVTIPEQPGSFLKFCHILGHVPVTEFKYRYADDKQACIFVGVRITGQEEKQTIINQLQQNGYDLIDLSNDDIAKTHVRYMIGGRSNSPLKERLYSFEFPEQKGALLKFLETLGQTHWNISVFHYRAHGADYGNVLAGFQLNDEDLDAFNQHLEKLGYVYQDVTESPAYRYFLV</sequence>
<comment type="function">
    <text evidence="1">Catalyzes the anaerobic formation of alpha-ketobutyrate and ammonia from threonine in a two-step reaction. The first step involved a dehydration of threonine and a production of enamine intermediates (aminocrotonate), which tautomerizes to its imine form (iminobutyrate). Both intermediates are unstable and short-lived. The second step is the nonenzymatic hydrolysis of the enamine/imine intermediates to form 2-ketobutyrate and free ammonia. In the low water environment of the cell, the second step is accelerated by RidA (By similarity).</text>
</comment>
<comment type="catalytic activity">
    <reaction>
        <text>L-threonine = 2-oxobutanoate + NH4(+)</text>
        <dbReference type="Rhea" id="RHEA:22108"/>
        <dbReference type="ChEBI" id="CHEBI:16763"/>
        <dbReference type="ChEBI" id="CHEBI:28938"/>
        <dbReference type="ChEBI" id="CHEBI:57926"/>
        <dbReference type="EC" id="4.3.1.19"/>
    </reaction>
</comment>
<comment type="cofactor">
    <cofactor evidence="1">
        <name>pyridoxal 5'-phosphate</name>
        <dbReference type="ChEBI" id="CHEBI:597326"/>
    </cofactor>
</comment>
<comment type="pathway">
    <text>Amino-acid biosynthesis; L-isoleucine biosynthesis; 2-oxobutanoate from L-threonine: step 1/1.</text>
</comment>
<comment type="subunit">
    <text evidence="1">Homotetramer.</text>
</comment>
<comment type="similarity">
    <text evidence="3">Belongs to the serine/threonine dehydratase family.</text>
</comment>
<name>ILVA_PASMU</name>
<accession>Q9CKJ2</accession>
<proteinExistence type="inferred from homology"/>